<feature type="chain" id="PRO_0000401940" description="tRNA (cytidine(34)-2'-O)-methyltransferase">
    <location>
        <begin position="1"/>
        <end position="162"/>
    </location>
</feature>
<feature type="binding site" evidence="1">
    <location>
        <position position="80"/>
    </location>
    <ligand>
        <name>S-adenosyl-L-methionine</name>
        <dbReference type="ChEBI" id="CHEBI:59789"/>
    </ligand>
</feature>
<feature type="binding site" evidence="1">
    <location>
        <position position="102"/>
    </location>
    <ligand>
        <name>S-adenosyl-L-methionine</name>
        <dbReference type="ChEBI" id="CHEBI:59789"/>
    </ligand>
</feature>
<feature type="binding site" evidence="1">
    <location>
        <position position="124"/>
    </location>
    <ligand>
        <name>S-adenosyl-L-methionine</name>
        <dbReference type="ChEBI" id="CHEBI:59789"/>
    </ligand>
</feature>
<feature type="binding site" evidence="1">
    <location>
        <position position="132"/>
    </location>
    <ligand>
        <name>S-adenosyl-L-methionine</name>
        <dbReference type="ChEBI" id="CHEBI:59789"/>
    </ligand>
</feature>
<sequence>MFHIVLVEPEIPPNTGNVIRLAANTGCMLHLVEPLGFSMEDPLMRRAGLDYHEYAEVRRHPGWTALLRDMQPDLSRMFALTTHGTQSVYDTGFLPGDWFVFGAESRGLPPELRETFPPAQRLRLPMLPNQRSLNLSNAVAVTVYEAWRQNSFLTPPTQPQPA</sequence>
<protein>
    <recommendedName>
        <fullName evidence="1">tRNA (cytidine(34)-2'-O)-methyltransferase</fullName>
        <ecNumber evidence="1">2.1.1.207</ecNumber>
    </recommendedName>
    <alternativeName>
        <fullName evidence="1">tRNA (cytidine/uridine-2'-O-)-methyltransferase TrmL</fullName>
    </alternativeName>
</protein>
<accession>A1WBM9</accession>
<evidence type="ECO:0000255" key="1">
    <source>
        <dbReference type="HAMAP-Rule" id="MF_01885"/>
    </source>
</evidence>
<evidence type="ECO:0000305" key="2"/>
<dbReference type="EC" id="2.1.1.207" evidence="1"/>
<dbReference type="EMBL" id="CP000539">
    <property type="protein sequence ID" value="ABM43654.1"/>
    <property type="status" value="ALT_INIT"/>
    <property type="molecule type" value="Genomic_DNA"/>
</dbReference>
<dbReference type="SMR" id="A1WBM9"/>
<dbReference type="STRING" id="232721.Ajs_3541"/>
<dbReference type="KEGG" id="ajs:Ajs_3541"/>
<dbReference type="eggNOG" id="COG0219">
    <property type="taxonomic scope" value="Bacteria"/>
</dbReference>
<dbReference type="HOGENOM" id="CLU_110125_1_0_4"/>
<dbReference type="Proteomes" id="UP000000645">
    <property type="component" value="Chromosome"/>
</dbReference>
<dbReference type="GO" id="GO:0005737">
    <property type="term" value="C:cytoplasm"/>
    <property type="evidence" value="ECO:0007669"/>
    <property type="project" value="UniProtKB-SubCell"/>
</dbReference>
<dbReference type="GO" id="GO:0003723">
    <property type="term" value="F:RNA binding"/>
    <property type="evidence" value="ECO:0007669"/>
    <property type="project" value="InterPro"/>
</dbReference>
<dbReference type="GO" id="GO:0141102">
    <property type="term" value="F:tRNA (5-carboxymethylaminomethyluridine(34)-2'-O)-methyltransferase activity"/>
    <property type="evidence" value="ECO:0007669"/>
    <property type="project" value="RHEA"/>
</dbReference>
<dbReference type="GO" id="GO:0141098">
    <property type="term" value="F:tRNA (cytidine(34)-2'-O)-methyltransferase activity"/>
    <property type="evidence" value="ECO:0007669"/>
    <property type="project" value="RHEA"/>
</dbReference>
<dbReference type="GO" id="GO:0002131">
    <property type="term" value="P:wobble position cytosine ribose methylation"/>
    <property type="evidence" value="ECO:0007669"/>
    <property type="project" value="TreeGrafter"/>
</dbReference>
<dbReference type="GO" id="GO:0002132">
    <property type="term" value="P:wobble position uridine ribose methylation"/>
    <property type="evidence" value="ECO:0007669"/>
    <property type="project" value="TreeGrafter"/>
</dbReference>
<dbReference type="CDD" id="cd18094">
    <property type="entry name" value="SpoU-like_TrmL"/>
    <property type="match status" value="1"/>
</dbReference>
<dbReference type="FunFam" id="3.40.1280.10:FF:000002">
    <property type="entry name" value="Peptidylprolyl isomerase"/>
    <property type="match status" value="1"/>
</dbReference>
<dbReference type="Gene3D" id="3.40.1280.10">
    <property type="match status" value="1"/>
</dbReference>
<dbReference type="HAMAP" id="MF_01885">
    <property type="entry name" value="tRNA_methyltr_TrmL"/>
    <property type="match status" value="1"/>
</dbReference>
<dbReference type="InterPro" id="IPR029028">
    <property type="entry name" value="Alpha/beta_knot_MTases"/>
</dbReference>
<dbReference type="InterPro" id="IPR001537">
    <property type="entry name" value="SpoU_MeTrfase"/>
</dbReference>
<dbReference type="InterPro" id="IPR016914">
    <property type="entry name" value="TrmL"/>
</dbReference>
<dbReference type="InterPro" id="IPR029026">
    <property type="entry name" value="tRNA_m1G_MTases_N"/>
</dbReference>
<dbReference type="PANTHER" id="PTHR42971">
    <property type="entry name" value="TRNA (CYTIDINE(34)-2'-O)-METHYLTRANSFERASE"/>
    <property type="match status" value="1"/>
</dbReference>
<dbReference type="PANTHER" id="PTHR42971:SF1">
    <property type="entry name" value="TRNA (CYTIDINE(34)-2'-O)-METHYLTRANSFERASE"/>
    <property type="match status" value="1"/>
</dbReference>
<dbReference type="Pfam" id="PF00588">
    <property type="entry name" value="SpoU_methylase"/>
    <property type="match status" value="1"/>
</dbReference>
<dbReference type="PIRSF" id="PIRSF029256">
    <property type="entry name" value="SpoU_TrmH_prd"/>
    <property type="match status" value="1"/>
</dbReference>
<dbReference type="SUPFAM" id="SSF75217">
    <property type="entry name" value="alpha/beta knot"/>
    <property type="match status" value="1"/>
</dbReference>
<reference key="1">
    <citation type="submission" date="2006-12" db="EMBL/GenBank/DDBJ databases">
        <title>Complete sequence of chromosome 1 of Acidovorax sp. JS42.</title>
        <authorList>
            <person name="Copeland A."/>
            <person name="Lucas S."/>
            <person name="Lapidus A."/>
            <person name="Barry K."/>
            <person name="Detter J.C."/>
            <person name="Glavina del Rio T."/>
            <person name="Dalin E."/>
            <person name="Tice H."/>
            <person name="Pitluck S."/>
            <person name="Chertkov O."/>
            <person name="Brettin T."/>
            <person name="Bruce D."/>
            <person name="Han C."/>
            <person name="Tapia R."/>
            <person name="Gilna P."/>
            <person name="Schmutz J."/>
            <person name="Larimer F."/>
            <person name="Land M."/>
            <person name="Hauser L."/>
            <person name="Kyrpides N."/>
            <person name="Kim E."/>
            <person name="Stahl D."/>
            <person name="Richardson P."/>
        </authorList>
    </citation>
    <scope>NUCLEOTIDE SEQUENCE [LARGE SCALE GENOMIC DNA]</scope>
    <source>
        <strain>JS42</strain>
    </source>
</reference>
<gene>
    <name evidence="1" type="primary">trmL</name>
    <name type="ordered locus">Ajs_3541</name>
</gene>
<comment type="function">
    <text evidence="1">Methylates the ribose at the nucleotide 34 wobble position in the two leucyl isoacceptors tRNA(Leu)(CmAA) and tRNA(Leu)(cmnm5UmAA). Catalyzes the methyl transfer from S-adenosyl-L-methionine to the 2'-OH of the wobble nucleotide.</text>
</comment>
<comment type="catalytic activity">
    <reaction evidence="1">
        <text>cytidine(34) in tRNA + S-adenosyl-L-methionine = 2'-O-methylcytidine(34) in tRNA + S-adenosyl-L-homocysteine + H(+)</text>
        <dbReference type="Rhea" id="RHEA:43084"/>
        <dbReference type="Rhea" id="RHEA-COMP:10331"/>
        <dbReference type="Rhea" id="RHEA-COMP:10332"/>
        <dbReference type="ChEBI" id="CHEBI:15378"/>
        <dbReference type="ChEBI" id="CHEBI:57856"/>
        <dbReference type="ChEBI" id="CHEBI:59789"/>
        <dbReference type="ChEBI" id="CHEBI:74495"/>
        <dbReference type="ChEBI" id="CHEBI:82748"/>
        <dbReference type="EC" id="2.1.1.207"/>
    </reaction>
</comment>
<comment type="catalytic activity">
    <reaction evidence="1">
        <text>5-carboxymethylaminomethyluridine(34) in tRNA(Leu) + S-adenosyl-L-methionine = 5-carboxymethylaminomethyl-2'-O-methyluridine(34) in tRNA(Leu) + S-adenosyl-L-homocysteine + H(+)</text>
        <dbReference type="Rhea" id="RHEA:43088"/>
        <dbReference type="Rhea" id="RHEA-COMP:10333"/>
        <dbReference type="Rhea" id="RHEA-COMP:10334"/>
        <dbReference type="ChEBI" id="CHEBI:15378"/>
        <dbReference type="ChEBI" id="CHEBI:57856"/>
        <dbReference type="ChEBI" id="CHEBI:59789"/>
        <dbReference type="ChEBI" id="CHEBI:74508"/>
        <dbReference type="ChEBI" id="CHEBI:74511"/>
        <dbReference type="EC" id="2.1.1.207"/>
    </reaction>
</comment>
<comment type="subunit">
    <text evidence="1">Homodimer.</text>
</comment>
<comment type="subcellular location">
    <subcellularLocation>
        <location evidence="1">Cytoplasm</location>
    </subcellularLocation>
</comment>
<comment type="similarity">
    <text evidence="1">Belongs to the class IV-like SAM-binding methyltransferase superfamily. RNA methyltransferase TrmH family. TrmL subfamily.</text>
</comment>
<comment type="sequence caution" evidence="2">
    <conflict type="erroneous initiation">
        <sequence resource="EMBL-CDS" id="ABM43654"/>
    </conflict>
    <text>Extended N-terminus.</text>
</comment>
<keyword id="KW-0963">Cytoplasm</keyword>
<keyword id="KW-0489">Methyltransferase</keyword>
<keyword id="KW-0949">S-adenosyl-L-methionine</keyword>
<keyword id="KW-0808">Transferase</keyword>
<keyword id="KW-0819">tRNA processing</keyword>
<name>TRML_ACISJ</name>
<proteinExistence type="inferred from homology"/>
<organism>
    <name type="scientific">Acidovorax sp. (strain JS42)</name>
    <dbReference type="NCBI Taxonomy" id="232721"/>
    <lineage>
        <taxon>Bacteria</taxon>
        <taxon>Pseudomonadati</taxon>
        <taxon>Pseudomonadota</taxon>
        <taxon>Betaproteobacteria</taxon>
        <taxon>Burkholderiales</taxon>
        <taxon>Comamonadaceae</taxon>
        <taxon>Acidovorax</taxon>
    </lineage>
</organism>